<proteinExistence type="inferred from homology"/>
<keyword id="KW-0052">Apoplast</keyword>
<keyword id="KW-1015">Disulfide bond</keyword>
<keyword id="KW-0325">Glycoprotein</keyword>
<keyword id="KW-0464">Manganese</keyword>
<keyword id="KW-0479">Metal-binding</keyword>
<keyword id="KW-1185">Reference proteome</keyword>
<keyword id="KW-0964">Secreted</keyword>
<keyword id="KW-0732">Signal</keyword>
<dbReference type="EMBL" id="DP000011">
    <property type="protein sequence ID" value="ABA96483.1"/>
    <property type="status" value="ALT_SEQ"/>
    <property type="molecule type" value="Genomic_DNA"/>
</dbReference>
<dbReference type="EMBL" id="AP008218">
    <property type="protein sequence ID" value="BAF29210.1"/>
    <property type="status" value="ALT_SEQ"/>
    <property type="molecule type" value="Genomic_DNA"/>
</dbReference>
<dbReference type="EMBL" id="AP014968">
    <property type="status" value="NOT_ANNOTATED_CDS"/>
    <property type="molecule type" value="Genomic_DNA"/>
</dbReference>
<dbReference type="EMBL" id="CM000149">
    <property type="protein sequence ID" value="EAZ19691.1"/>
    <property type="status" value="ALT_SEQ"/>
    <property type="molecule type" value="Genomic_DNA"/>
</dbReference>
<dbReference type="SMR" id="Q2QXJ0"/>
<dbReference type="FunCoup" id="Q2QXJ0">
    <property type="interactions" value="40"/>
</dbReference>
<dbReference type="STRING" id="39947.Q2QXJ0"/>
<dbReference type="PaxDb" id="39947-Q2QXJ0"/>
<dbReference type="KEGG" id="dosa:Os12g0155000"/>
<dbReference type="InParanoid" id="Q2QXJ0"/>
<dbReference type="Proteomes" id="UP000000763">
    <property type="component" value="Chromosome 12"/>
</dbReference>
<dbReference type="Proteomes" id="UP000007752">
    <property type="component" value="Chromosome 12"/>
</dbReference>
<dbReference type="Proteomes" id="UP000059680">
    <property type="component" value="Chromosome 12"/>
</dbReference>
<dbReference type="GO" id="GO:0048046">
    <property type="term" value="C:apoplast"/>
    <property type="evidence" value="ECO:0007669"/>
    <property type="project" value="UniProtKB-SubCell"/>
</dbReference>
<dbReference type="GO" id="GO:0030145">
    <property type="term" value="F:manganese ion binding"/>
    <property type="evidence" value="ECO:0007669"/>
    <property type="project" value="InterPro"/>
</dbReference>
<dbReference type="CDD" id="cd02241">
    <property type="entry name" value="cupin_OxOx"/>
    <property type="match status" value="1"/>
</dbReference>
<dbReference type="FunFam" id="2.60.120.10:FF:000005">
    <property type="entry name" value="Germin-like protein subfamily 1 member 8"/>
    <property type="match status" value="1"/>
</dbReference>
<dbReference type="Gene3D" id="2.60.120.10">
    <property type="entry name" value="Jelly Rolls"/>
    <property type="match status" value="1"/>
</dbReference>
<dbReference type="InterPro" id="IPR006045">
    <property type="entry name" value="Cupin_1"/>
</dbReference>
<dbReference type="InterPro" id="IPR001929">
    <property type="entry name" value="Germin"/>
</dbReference>
<dbReference type="InterPro" id="IPR019780">
    <property type="entry name" value="Germin_Mn-BS"/>
</dbReference>
<dbReference type="InterPro" id="IPR014710">
    <property type="entry name" value="RmlC-like_jellyroll"/>
</dbReference>
<dbReference type="InterPro" id="IPR011051">
    <property type="entry name" value="RmlC_Cupin_sf"/>
</dbReference>
<dbReference type="PANTHER" id="PTHR31238">
    <property type="entry name" value="GERMIN-LIKE PROTEIN SUBFAMILY 3 MEMBER 3"/>
    <property type="match status" value="1"/>
</dbReference>
<dbReference type="Pfam" id="PF00190">
    <property type="entry name" value="Cupin_1"/>
    <property type="match status" value="1"/>
</dbReference>
<dbReference type="PRINTS" id="PR00325">
    <property type="entry name" value="GERMIN"/>
</dbReference>
<dbReference type="SMART" id="SM00835">
    <property type="entry name" value="Cupin_1"/>
    <property type="match status" value="1"/>
</dbReference>
<dbReference type="SUPFAM" id="SSF51182">
    <property type="entry name" value="RmlC-like cupins"/>
    <property type="match status" value="1"/>
</dbReference>
<dbReference type="PROSITE" id="PS00725">
    <property type="entry name" value="GERMIN"/>
    <property type="match status" value="1"/>
</dbReference>
<comment type="function">
    <text>May play a role in plant defense. Probably has no oxalate oxidase activity even if the active site is conserved.</text>
</comment>
<comment type="subunit">
    <text evidence="1">Oligomer (believed to be a pentamer but probably hexamer).</text>
</comment>
<comment type="subcellular location">
    <subcellularLocation>
        <location evidence="1">Secreted</location>
        <location evidence="1">Extracellular space</location>
        <location evidence="1">Apoplast</location>
    </subcellularLocation>
</comment>
<comment type="similarity">
    <text evidence="3">Belongs to the germin family.</text>
</comment>
<comment type="sequence caution" evidence="3">
    <conflict type="erroneous gene model prediction">
        <sequence resource="EMBL-CDS" id="ABA96483"/>
    </conflict>
</comment>
<comment type="sequence caution" evidence="3">
    <conflict type="erroneous gene model prediction">
        <sequence resource="EMBL-CDS" id="BAF29210"/>
    </conflict>
</comment>
<comment type="sequence caution" evidence="3">
    <conflict type="erroneous gene model prediction">
        <sequence resource="EMBL-CDS" id="EAZ19691"/>
    </conflict>
</comment>
<protein>
    <recommendedName>
        <fullName>Putative germin-like protein 12-4</fullName>
    </recommendedName>
</protein>
<reference key="1">
    <citation type="journal article" date="2005" name="BMC Biol.">
        <title>The sequence of rice chromosomes 11 and 12, rich in disease resistance genes and recent gene duplications.</title>
        <authorList>
            <consortium name="The rice chromosomes 11 and 12 sequencing consortia"/>
        </authorList>
    </citation>
    <scope>NUCLEOTIDE SEQUENCE [LARGE SCALE GENOMIC DNA]</scope>
    <source>
        <strain>cv. Nipponbare</strain>
    </source>
</reference>
<reference key="2">
    <citation type="journal article" date="2005" name="Nature">
        <title>The map-based sequence of the rice genome.</title>
        <authorList>
            <consortium name="International rice genome sequencing project (IRGSP)"/>
        </authorList>
    </citation>
    <scope>NUCLEOTIDE SEQUENCE [LARGE SCALE GENOMIC DNA]</scope>
    <source>
        <strain>cv. Nipponbare</strain>
    </source>
</reference>
<reference key="3">
    <citation type="journal article" date="2008" name="Nucleic Acids Res.">
        <title>The rice annotation project database (RAP-DB): 2008 update.</title>
        <authorList>
            <consortium name="The rice annotation project (RAP)"/>
        </authorList>
    </citation>
    <scope>GENOME REANNOTATION</scope>
    <source>
        <strain>cv. Nipponbare</strain>
    </source>
</reference>
<reference key="4">
    <citation type="journal article" date="2013" name="Rice">
        <title>Improvement of the Oryza sativa Nipponbare reference genome using next generation sequence and optical map data.</title>
        <authorList>
            <person name="Kawahara Y."/>
            <person name="de la Bastide M."/>
            <person name="Hamilton J.P."/>
            <person name="Kanamori H."/>
            <person name="McCombie W.R."/>
            <person name="Ouyang S."/>
            <person name="Schwartz D.C."/>
            <person name="Tanaka T."/>
            <person name="Wu J."/>
            <person name="Zhou S."/>
            <person name="Childs K.L."/>
            <person name="Davidson R.M."/>
            <person name="Lin H."/>
            <person name="Quesada-Ocampo L."/>
            <person name="Vaillancourt B."/>
            <person name="Sakai H."/>
            <person name="Lee S.S."/>
            <person name="Kim J."/>
            <person name="Numa H."/>
            <person name="Itoh T."/>
            <person name="Buell C.R."/>
            <person name="Matsumoto T."/>
        </authorList>
    </citation>
    <scope>GENOME REANNOTATION</scope>
    <source>
        <strain>cv. Nipponbare</strain>
    </source>
</reference>
<reference key="5">
    <citation type="journal article" date="2005" name="PLoS Biol.">
        <title>The genomes of Oryza sativa: a history of duplications.</title>
        <authorList>
            <person name="Yu J."/>
            <person name="Wang J."/>
            <person name="Lin W."/>
            <person name="Li S."/>
            <person name="Li H."/>
            <person name="Zhou J."/>
            <person name="Ni P."/>
            <person name="Dong W."/>
            <person name="Hu S."/>
            <person name="Zeng C."/>
            <person name="Zhang J."/>
            <person name="Zhang Y."/>
            <person name="Li R."/>
            <person name="Xu Z."/>
            <person name="Li S."/>
            <person name="Li X."/>
            <person name="Zheng H."/>
            <person name="Cong L."/>
            <person name="Lin L."/>
            <person name="Yin J."/>
            <person name="Geng J."/>
            <person name="Li G."/>
            <person name="Shi J."/>
            <person name="Liu J."/>
            <person name="Lv H."/>
            <person name="Li J."/>
            <person name="Wang J."/>
            <person name="Deng Y."/>
            <person name="Ran L."/>
            <person name="Shi X."/>
            <person name="Wang X."/>
            <person name="Wu Q."/>
            <person name="Li C."/>
            <person name="Ren X."/>
            <person name="Wang J."/>
            <person name="Wang X."/>
            <person name="Li D."/>
            <person name="Liu D."/>
            <person name="Zhang X."/>
            <person name="Ji Z."/>
            <person name="Zhao W."/>
            <person name="Sun Y."/>
            <person name="Zhang Z."/>
            <person name="Bao J."/>
            <person name="Han Y."/>
            <person name="Dong L."/>
            <person name="Ji J."/>
            <person name="Chen P."/>
            <person name="Wu S."/>
            <person name="Liu J."/>
            <person name="Xiao Y."/>
            <person name="Bu D."/>
            <person name="Tan J."/>
            <person name="Yang L."/>
            <person name="Ye C."/>
            <person name="Zhang J."/>
            <person name="Xu J."/>
            <person name="Zhou Y."/>
            <person name="Yu Y."/>
            <person name="Zhang B."/>
            <person name="Zhuang S."/>
            <person name="Wei H."/>
            <person name="Liu B."/>
            <person name="Lei M."/>
            <person name="Yu H."/>
            <person name="Li Y."/>
            <person name="Xu H."/>
            <person name="Wei S."/>
            <person name="He X."/>
            <person name="Fang L."/>
            <person name="Zhang Z."/>
            <person name="Zhang Y."/>
            <person name="Huang X."/>
            <person name="Su Z."/>
            <person name="Tong W."/>
            <person name="Li J."/>
            <person name="Tong Z."/>
            <person name="Li S."/>
            <person name="Ye J."/>
            <person name="Wang L."/>
            <person name="Fang L."/>
            <person name="Lei T."/>
            <person name="Chen C.-S."/>
            <person name="Chen H.-C."/>
            <person name="Xu Z."/>
            <person name="Li H."/>
            <person name="Huang H."/>
            <person name="Zhang F."/>
            <person name="Xu H."/>
            <person name="Li N."/>
            <person name="Zhao C."/>
            <person name="Li S."/>
            <person name="Dong L."/>
            <person name="Huang Y."/>
            <person name="Li L."/>
            <person name="Xi Y."/>
            <person name="Qi Q."/>
            <person name="Li W."/>
            <person name="Zhang B."/>
            <person name="Hu W."/>
            <person name="Zhang Y."/>
            <person name="Tian X."/>
            <person name="Jiao Y."/>
            <person name="Liang X."/>
            <person name="Jin J."/>
            <person name="Gao L."/>
            <person name="Zheng W."/>
            <person name="Hao B."/>
            <person name="Liu S.-M."/>
            <person name="Wang W."/>
            <person name="Yuan L."/>
            <person name="Cao M."/>
            <person name="McDermott J."/>
            <person name="Samudrala R."/>
            <person name="Wang J."/>
            <person name="Wong G.K.-S."/>
            <person name="Yang H."/>
        </authorList>
    </citation>
    <scope>NUCLEOTIDE SEQUENCE [LARGE SCALE GENOMIC DNA]</scope>
    <source>
        <strain>cv. Nipponbare</strain>
    </source>
</reference>
<evidence type="ECO:0000250" key="1"/>
<evidence type="ECO:0000255" key="2"/>
<evidence type="ECO:0000305" key="3"/>
<feature type="signal peptide" evidence="2">
    <location>
        <begin position="1"/>
        <end position="22"/>
    </location>
</feature>
<feature type="chain" id="PRO_0000365534" description="Putative germin-like protein 12-4">
    <location>
        <begin position="23"/>
        <end position="229"/>
    </location>
</feature>
<feature type="domain" description="Cupin type-1" evidence="2">
    <location>
        <begin position="62"/>
        <end position="217"/>
    </location>
</feature>
<feature type="binding site" evidence="1">
    <location>
        <position position="111"/>
    </location>
    <ligand>
        <name>Mn(2+)</name>
        <dbReference type="ChEBI" id="CHEBI:29035"/>
    </ligand>
</feature>
<feature type="binding site" evidence="1">
    <location>
        <position position="113"/>
    </location>
    <ligand>
        <name>Mn(2+)</name>
        <dbReference type="ChEBI" id="CHEBI:29035"/>
    </ligand>
</feature>
<feature type="binding site" evidence="1">
    <location>
        <position position="118"/>
    </location>
    <ligand>
        <name>Mn(2+)</name>
        <dbReference type="ChEBI" id="CHEBI:29035"/>
    </ligand>
</feature>
<feature type="binding site" evidence="1">
    <location>
        <position position="162"/>
    </location>
    <ligand>
        <name>Mn(2+)</name>
        <dbReference type="ChEBI" id="CHEBI:29035"/>
    </ligand>
</feature>
<feature type="glycosylation site" description="N-linked (GlcNAc...) asparagine" evidence="2">
    <location>
        <position position="78"/>
    </location>
</feature>
<feature type="disulfide bond" evidence="1">
    <location>
        <begin position="32"/>
        <end position="47"/>
    </location>
</feature>
<organism>
    <name type="scientific">Oryza sativa subsp. japonica</name>
    <name type="common">Rice</name>
    <dbReference type="NCBI Taxonomy" id="39947"/>
    <lineage>
        <taxon>Eukaryota</taxon>
        <taxon>Viridiplantae</taxon>
        <taxon>Streptophyta</taxon>
        <taxon>Embryophyta</taxon>
        <taxon>Tracheophyta</taxon>
        <taxon>Spermatophyta</taxon>
        <taxon>Magnoliopsida</taxon>
        <taxon>Liliopsida</taxon>
        <taxon>Poales</taxon>
        <taxon>Poaceae</taxon>
        <taxon>BOP clade</taxon>
        <taxon>Oryzoideae</taxon>
        <taxon>Oryzeae</taxon>
        <taxon>Oryzinae</taxon>
        <taxon>Oryza</taxon>
        <taxon>Oryza sativa</taxon>
    </lineage>
</organism>
<accession>Q2QXJ0</accession>
<gene>
    <name type="ordered locus">Os12g0155000</name>
    <name type="ordered locus">LOC_Os12g05880</name>
    <name type="ORF">OsJ_033900</name>
</gene>
<name>GL124_ORYSJ</name>
<sequence length="229" mass="24835">MAASNFFLLTAFIALVATQAMASDPSPLQDFCVADKHSPVRVNGLPCKDAKDVSVDDFFLAANLDKPMDTTKSKAGSNVTLINVMKLAGLNTLSISMARIDYAPKGQNPPHTHPRATEILTVLEGSLYVGFVTSNQANRENKLFTKTLNKGDVFVFPQGLIHFQFNPSYDKPAVAIAALSSQNPGAITIANAVFGSHPPISDDVLAKAFQVDKKAMDWLQAQFWENNHN</sequence>